<accession>A0A330</accession>
<feature type="initiator methionine" description="Removed" evidence="1">
    <location>
        <position position="1"/>
    </location>
</feature>
<feature type="chain" id="PRO_0000359637" description="Photosystem II D2 protein">
    <location>
        <begin position="2"/>
        <end position="353"/>
    </location>
</feature>
<feature type="transmembrane region" description="Helical" evidence="2">
    <location>
        <begin position="41"/>
        <end position="61"/>
    </location>
</feature>
<feature type="transmembrane region" description="Helical" evidence="2">
    <location>
        <begin position="125"/>
        <end position="141"/>
    </location>
</feature>
<feature type="transmembrane region" description="Helical" evidence="2">
    <location>
        <begin position="153"/>
        <end position="166"/>
    </location>
</feature>
<feature type="transmembrane region" description="Helical" evidence="2">
    <location>
        <begin position="208"/>
        <end position="228"/>
    </location>
</feature>
<feature type="transmembrane region" description="Helical" evidence="2">
    <location>
        <begin position="279"/>
        <end position="295"/>
    </location>
</feature>
<feature type="binding site" description="axial binding residue" evidence="2">
    <location>
        <position position="118"/>
    </location>
    <ligand>
        <name>chlorophyll a</name>
        <dbReference type="ChEBI" id="CHEBI:58416"/>
        <label>ChlzD2</label>
    </ligand>
    <ligandPart>
        <name>Mg</name>
        <dbReference type="ChEBI" id="CHEBI:25107"/>
    </ligandPart>
</feature>
<feature type="binding site" evidence="2">
    <location>
        <position position="130"/>
    </location>
    <ligand>
        <name>pheophytin a</name>
        <dbReference type="ChEBI" id="CHEBI:136840"/>
        <label>D2</label>
    </ligand>
</feature>
<feature type="binding site" evidence="2">
    <location>
        <position position="143"/>
    </location>
    <ligand>
        <name>pheophytin a</name>
        <dbReference type="ChEBI" id="CHEBI:136840"/>
        <label>D2</label>
    </ligand>
</feature>
<feature type="binding site" description="axial binding residue" evidence="2">
    <location>
        <position position="198"/>
    </location>
    <ligand>
        <name>chlorophyll a</name>
        <dbReference type="ChEBI" id="CHEBI:58416"/>
        <label>PD2</label>
    </ligand>
    <ligandPart>
        <name>Mg</name>
        <dbReference type="ChEBI" id="CHEBI:25107"/>
    </ligandPart>
</feature>
<feature type="binding site" evidence="2">
    <location>
        <position position="215"/>
    </location>
    <ligand>
        <name>a plastoquinone</name>
        <dbReference type="ChEBI" id="CHEBI:17757"/>
        <label>Q(A)</label>
    </ligand>
</feature>
<feature type="binding site" evidence="2">
    <location>
        <position position="215"/>
    </location>
    <ligand>
        <name>Fe cation</name>
        <dbReference type="ChEBI" id="CHEBI:24875"/>
        <note>ligand shared with heterodimeric partner</note>
    </ligand>
</feature>
<feature type="binding site" evidence="2">
    <location>
        <position position="262"/>
    </location>
    <ligand>
        <name>a plastoquinone</name>
        <dbReference type="ChEBI" id="CHEBI:17757"/>
        <label>Q(A)</label>
    </ligand>
</feature>
<feature type="binding site" evidence="2">
    <location>
        <position position="269"/>
    </location>
    <ligand>
        <name>Fe cation</name>
        <dbReference type="ChEBI" id="CHEBI:24875"/>
        <note>ligand shared with heterodimeric partner</note>
    </ligand>
</feature>
<feature type="modified residue" description="N-acetylthreonine" evidence="1">
    <location>
        <position position="2"/>
    </location>
</feature>
<feature type="modified residue" description="Phosphothreonine" evidence="1">
    <location>
        <position position="2"/>
    </location>
</feature>
<gene>
    <name evidence="2" type="primary">psbD</name>
</gene>
<evidence type="ECO:0000250" key="1">
    <source>
        <dbReference type="UniProtKB" id="P56761"/>
    </source>
</evidence>
<evidence type="ECO:0000255" key="2">
    <source>
        <dbReference type="HAMAP-Rule" id="MF_01383"/>
    </source>
</evidence>
<comment type="function">
    <text evidence="2">Photosystem II (PSII) is a light-driven water:plastoquinone oxidoreductase that uses light energy to abstract electrons from H(2)O, generating O(2) and a proton gradient subsequently used for ATP formation. It consists of a core antenna complex that captures photons, and an electron transfer chain that converts photonic excitation into a charge separation. The D1/D2 (PsbA/PsbD) reaction center heterodimer binds P680, the primary electron donor of PSII as well as several subsequent electron acceptors. D2 is needed for assembly of a stable PSII complex.</text>
</comment>
<comment type="catalytic activity">
    <reaction evidence="2">
        <text>2 a plastoquinone + 4 hnu + 2 H2O = 2 a plastoquinol + O2</text>
        <dbReference type="Rhea" id="RHEA:36359"/>
        <dbReference type="Rhea" id="RHEA-COMP:9561"/>
        <dbReference type="Rhea" id="RHEA-COMP:9562"/>
        <dbReference type="ChEBI" id="CHEBI:15377"/>
        <dbReference type="ChEBI" id="CHEBI:15379"/>
        <dbReference type="ChEBI" id="CHEBI:17757"/>
        <dbReference type="ChEBI" id="CHEBI:30212"/>
        <dbReference type="ChEBI" id="CHEBI:62192"/>
        <dbReference type="EC" id="1.10.3.9"/>
    </reaction>
</comment>
<comment type="cofactor">
    <text evidence="2">The D1/D2 heterodimer binds P680, chlorophylls that are the primary electron donor of PSII, and subsequent electron acceptors. It shares a non-heme iron and each subunit binds pheophytin, quinone, additional chlorophylls, carotenoids and lipids. There is also a Cl(-1) ion associated with D1 and D2, which is required for oxygen evolution. The PSII complex binds additional chlorophylls, carotenoids and specific lipids.</text>
</comment>
<comment type="subunit">
    <text evidence="2">PSII is composed of 1 copy each of membrane proteins PsbA, PsbB, PsbC, PsbD, PsbE, PsbF, PsbH, PsbI, PsbJ, PsbK, PsbL, PsbM, PsbT, PsbX, PsbY, PsbZ, Psb30/Ycf12, at least 3 peripheral proteins of the oxygen-evolving complex and a large number of cofactors. It forms dimeric complexes.</text>
</comment>
<comment type="subcellular location">
    <subcellularLocation>
        <location evidence="2">Plastid</location>
        <location evidence="2">Chloroplast thylakoid membrane</location>
        <topology evidence="2">Multi-pass membrane protein</topology>
    </subcellularLocation>
</comment>
<comment type="miscellaneous">
    <text evidence="2">2 of the reaction center chlorophylls (ChlD1 and ChlD2) are entirely coordinated by water.</text>
</comment>
<comment type="similarity">
    <text evidence="2">Belongs to the reaction center PufL/M/PsbA/D family.</text>
</comment>
<dbReference type="EC" id="1.10.3.9" evidence="2"/>
<dbReference type="EMBL" id="EF044213">
    <property type="protein sequence ID" value="ABJ89674.1"/>
    <property type="molecule type" value="Genomic_DNA"/>
</dbReference>
<dbReference type="RefSeq" id="YP_817477.1">
    <property type="nucleotide sequence ID" value="NC_008535.1"/>
</dbReference>
<dbReference type="SMR" id="A0A330"/>
<dbReference type="GeneID" id="4421868"/>
<dbReference type="OrthoDB" id="1924410at2759"/>
<dbReference type="Proteomes" id="UP000515148">
    <property type="component" value="Chloroplast Pltd"/>
</dbReference>
<dbReference type="GO" id="GO:0009535">
    <property type="term" value="C:chloroplast thylakoid membrane"/>
    <property type="evidence" value="ECO:0007669"/>
    <property type="project" value="UniProtKB-SubCell"/>
</dbReference>
<dbReference type="GO" id="GO:0009523">
    <property type="term" value="C:photosystem II"/>
    <property type="evidence" value="ECO:0007669"/>
    <property type="project" value="UniProtKB-KW"/>
</dbReference>
<dbReference type="GO" id="GO:0016168">
    <property type="term" value="F:chlorophyll binding"/>
    <property type="evidence" value="ECO:0007669"/>
    <property type="project" value="UniProtKB-UniRule"/>
</dbReference>
<dbReference type="GO" id="GO:0045156">
    <property type="term" value="F:electron transporter, transferring electrons within the cyclic electron transport pathway of photosynthesis activity"/>
    <property type="evidence" value="ECO:0007669"/>
    <property type="project" value="InterPro"/>
</dbReference>
<dbReference type="GO" id="GO:0005506">
    <property type="term" value="F:iron ion binding"/>
    <property type="evidence" value="ECO:0007669"/>
    <property type="project" value="UniProtKB-UniRule"/>
</dbReference>
<dbReference type="GO" id="GO:0010242">
    <property type="term" value="F:oxygen evolving activity"/>
    <property type="evidence" value="ECO:0007669"/>
    <property type="project" value="UniProtKB-EC"/>
</dbReference>
<dbReference type="GO" id="GO:0009772">
    <property type="term" value="P:photosynthetic electron transport in photosystem II"/>
    <property type="evidence" value="ECO:0007669"/>
    <property type="project" value="InterPro"/>
</dbReference>
<dbReference type="CDD" id="cd09288">
    <property type="entry name" value="Photosystem-II_D2"/>
    <property type="match status" value="1"/>
</dbReference>
<dbReference type="FunFam" id="1.20.85.10:FF:000001">
    <property type="entry name" value="photosystem II D2 protein-like"/>
    <property type="match status" value="1"/>
</dbReference>
<dbReference type="Gene3D" id="1.20.85.10">
    <property type="entry name" value="Photosystem II protein D1-like"/>
    <property type="match status" value="1"/>
</dbReference>
<dbReference type="HAMAP" id="MF_01383">
    <property type="entry name" value="PSII_PsbD_D2"/>
    <property type="match status" value="1"/>
</dbReference>
<dbReference type="InterPro" id="IPR055266">
    <property type="entry name" value="D1/D2"/>
</dbReference>
<dbReference type="InterPro" id="IPR036854">
    <property type="entry name" value="Photo_II_D1/D2_sf"/>
</dbReference>
<dbReference type="InterPro" id="IPR000484">
    <property type="entry name" value="Photo_RC_L/M"/>
</dbReference>
<dbReference type="InterPro" id="IPR055265">
    <property type="entry name" value="Photo_RC_L/M_CS"/>
</dbReference>
<dbReference type="InterPro" id="IPR005868">
    <property type="entry name" value="PSII_PsbD/D2"/>
</dbReference>
<dbReference type="NCBIfam" id="TIGR01152">
    <property type="entry name" value="psbD"/>
    <property type="match status" value="1"/>
</dbReference>
<dbReference type="PANTHER" id="PTHR33149:SF12">
    <property type="entry name" value="PHOTOSYSTEM II D2 PROTEIN"/>
    <property type="match status" value="1"/>
</dbReference>
<dbReference type="PANTHER" id="PTHR33149">
    <property type="entry name" value="PHOTOSYSTEM II PROTEIN D1"/>
    <property type="match status" value="1"/>
</dbReference>
<dbReference type="Pfam" id="PF00124">
    <property type="entry name" value="Photo_RC"/>
    <property type="match status" value="1"/>
</dbReference>
<dbReference type="PRINTS" id="PR00256">
    <property type="entry name" value="REACTNCENTRE"/>
</dbReference>
<dbReference type="SUPFAM" id="SSF81483">
    <property type="entry name" value="Bacterial photosystem II reaction centre, L and M subunits"/>
    <property type="match status" value="1"/>
</dbReference>
<dbReference type="PROSITE" id="PS00244">
    <property type="entry name" value="REACTION_CENTER"/>
    <property type="match status" value="1"/>
</dbReference>
<proteinExistence type="inferred from homology"/>
<sequence length="353" mass="39564">MTIALGKFTKDENDLFDIMDDWLRRDRFVFVGWSGLLLFPCAYFALGGWFTGTTFVTSWYTHGLASSYLEGCNFLTAAVSTPANSLAHSLLLLWGPEAQGDFTRWCQLGGLWTFVALHGAFGLIGFMLRQFELARSVQLRPYNAIAFSAPIAVFVSVFLIYPLGQSGWFFAPSFGVAAIFRFILFFQGFHNWTLNPFHMMGVAGVLGAALLCAIHGATVENTLFEDGDGANTFRAFNPTQAEETYSMVTANRFWSQIFGVAFSNKRWLHFFMLFVPVTGLWMSALGVVGLALNLRAYDFVSQEIRAAEDPEFETFYTKNILLNEGIRAWMAAQDQPHENLIFPEEVLPRGNAL</sequence>
<keyword id="KW-0007">Acetylation</keyword>
<keyword id="KW-0148">Chlorophyll</keyword>
<keyword id="KW-0150">Chloroplast</keyword>
<keyword id="KW-0157">Chromophore</keyword>
<keyword id="KW-0249">Electron transport</keyword>
<keyword id="KW-0408">Iron</keyword>
<keyword id="KW-0460">Magnesium</keyword>
<keyword id="KW-0472">Membrane</keyword>
<keyword id="KW-0479">Metal-binding</keyword>
<keyword id="KW-0560">Oxidoreductase</keyword>
<keyword id="KW-0597">Phosphoprotein</keyword>
<keyword id="KW-0602">Photosynthesis</keyword>
<keyword id="KW-0604">Photosystem II</keyword>
<keyword id="KW-0934">Plastid</keyword>
<keyword id="KW-1185">Reference proteome</keyword>
<keyword id="KW-0793">Thylakoid</keyword>
<keyword id="KW-0812">Transmembrane</keyword>
<keyword id="KW-1133">Transmembrane helix</keyword>
<keyword id="KW-0813">Transport</keyword>
<organism>
    <name type="scientific">Coffea arabica</name>
    <name type="common">Arabian coffee</name>
    <dbReference type="NCBI Taxonomy" id="13443"/>
    <lineage>
        <taxon>Eukaryota</taxon>
        <taxon>Viridiplantae</taxon>
        <taxon>Streptophyta</taxon>
        <taxon>Embryophyta</taxon>
        <taxon>Tracheophyta</taxon>
        <taxon>Spermatophyta</taxon>
        <taxon>Magnoliopsida</taxon>
        <taxon>eudicotyledons</taxon>
        <taxon>Gunneridae</taxon>
        <taxon>Pentapetalae</taxon>
        <taxon>asterids</taxon>
        <taxon>lamiids</taxon>
        <taxon>Gentianales</taxon>
        <taxon>Rubiaceae</taxon>
        <taxon>Ixoroideae</taxon>
        <taxon>Gardenieae complex</taxon>
        <taxon>Bertiereae - Coffeeae clade</taxon>
        <taxon>Coffeeae</taxon>
        <taxon>Coffea</taxon>
    </lineage>
</organism>
<reference key="1">
    <citation type="journal article" date="2007" name="Plant Biotechnol. J.">
        <title>The complete nucleotide sequence of the coffee (Coffea arabica L.) chloroplast genome: organization and implications for biotechnology and phylogenetic relationships amongst angiosperms.</title>
        <authorList>
            <person name="Samson N."/>
            <person name="Bausher M.G."/>
            <person name="Lee S.-B."/>
            <person name="Jansen R.K."/>
            <person name="Daniell H."/>
        </authorList>
    </citation>
    <scope>NUCLEOTIDE SEQUENCE [LARGE SCALE GENOMIC DNA]</scope>
</reference>
<protein>
    <recommendedName>
        <fullName evidence="2">Photosystem II D2 protein</fullName>
        <shortName evidence="2">PSII D2 protein</shortName>
        <ecNumber evidence="2">1.10.3.9</ecNumber>
    </recommendedName>
    <alternativeName>
        <fullName evidence="2">Photosystem Q(A) protein</fullName>
    </alternativeName>
</protein>
<name>PSBD_COFAR</name>
<geneLocation type="chloroplast"/>